<keyword id="KW-0929">Antimicrobial</keyword>
<keyword id="KW-0903">Direct protein sequencing</keyword>
<keyword id="KW-0391">Immunity</keyword>
<keyword id="KW-0399">Innate immunity</keyword>
<keyword id="KW-0964">Secreted</keyword>
<sequence length="10" mass="1237">IIIQYEGHKH</sequence>
<protein>
    <recommendedName>
        <fullName evidence="2">Rondonin</fullName>
    </recommendedName>
</protein>
<accession>B3EWP8</accession>
<feature type="peptide" id="PRO_0000419530" description="Rondonin" evidence="1">
    <location>
        <begin position="1"/>
        <end position="10"/>
    </location>
</feature>
<dbReference type="GO" id="GO:0005615">
    <property type="term" value="C:extracellular space"/>
    <property type="evidence" value="ECO:0000314"/>
    <property type="project" value="UniProtKB"/>
</dbReference>
<dbReference type="GO" id="GO:0050832">
    <property type="term" value="P:defense response to fungus"/>
    <property type="evidence" value="ECO:0000314"/>
    <property type="project" value="UniProtKB"/>
</dbReference>
<dbReference type="GO" id="GO:0045087">
    <property type="term" value="P:innate immune response"/>
    <property type="evidence" value="ECO:0007669"/>
    <property type="project" value="UniProtKB-KW"/>
</dbReference>
<proteinExistence type="evidence at protein level"/>
<evidence type="ECO:0000269" key="1">
    <source>
    </source>
</evidence>
<evidence type="ECO:0000303" key="2">
    <source>
    </source>
</evidence>
<evidence type="ECO:0000305" key="3"/>
<evidence type="ECO:0000305" key="4">
    <source>
    </source>
</evidence>
<name>RDNIN_ACARO</name>
<organism>
    <name type="scientific">Acanthoscurria rondoniae</name>
    <name type="common">Spider</name>
    <dbReference type="NCBI Taxonomy" id="1211104"/>
    <lineage>
        <taxon>Eukaryota</taxon>
        <taxon>Metazoa</taxon>
        <taxon>Ecdysozoa</taxon>
        <taxon>Arthropoda</taxon>
        <taxon>Chelicerata</taxon>
        <taxon>Arachnida</taxon>
        <taxon>Araneae</taxon>
        <taxon>Mygalomorphae</taxon>
        <taxon>Theraphosidae</taxon>
        <taxon>Acanthoscurria</taxon>
    </lineage>
</organism>
<comment type="function">
    <text evidence="1">Exhibits antifungal activity against Candida sp. but does not possess antibacterial activity. Has no hemolytic activity but may have been derived from hemocyanin.</text>
</comment>
<comment type="subcellular location">
    <subcellularLocation>
        <location evidence="4">Secreted</location>
    </subcellularLocation>
</comment>
<comment type="tissue specificity">
    <text evidence="4">Expressed in hemocytes.</text>
</comment>
<comment type="mass spectrometry" mass="1236.77" method="MALDI" evidence="1"/>
<reference evidence="3" key="1">
    <citation type="journal article" date="2012" name="Results Immunol.">
        <title>Rondonin an antifungal peptide from spider (Acanthoscurria rondoniae) haemolymph.</title>
        <authorList>
            <person name="Riciluca K.C.T."/>
            <person name="Sayegh R.S.R."/>
            <person name="Melo R.L."/>
            <person name="Silva P.I. Jr."/>
        </authorList>
    </citation>
    <scope>PROTEIN SEQUENCE</scope>
    <scope>FUNCTION</scope>
    <scope>MASS SPECTROMETRY</scope>
    <source>
        <tissue evidence="1">Hemolymph</tissue>
    </source>
</reference>